<name>RL20_PSEP1</name>
<evidence type="ECO:0000255" key="1">
    <source>
        <dbReference type="HAMAP-Rule" id="MF_00382"/>
    </source>
</evidence>
<evidence type="ECO:0000305" key="2"/>
<organism>
    <name type="scientific">Pseudomonas putida (strain ATCC 700007 / DSM 6899 / JCM 31910 / BCRC 17059 / LMG 24140 / F1)</name>
    <dbReference type="NCBI Taxonomy" id="351746"/>
    <lineage>
        <taxon>Bacteria</taxon>
        <taxon>Pseudomonadati</taxon>
        <taxon>Pseudomonadota</taxon>
        <taxon>Gammaproteobacteria</taxon>
        <taxon>Pseudomonadales</taxon>
        <taxon>Pseudomonadaceae</taxon>
        <taxon>Pseudomonas</taxon>
    </lineage>
</organism>
<proteinExistence type="inferred from homology"/>
<gene>
    <name evidence="1" type="primary">rplT</name>
    <name type="ordered locus">Pput_3222</name>
</gene>
<accession>A5W5D8</accession>
<keyword id="KW-0687">Ribonucleoprotein</keyword>
<keyword id="KW-0689">Ribosomal protein</keyword>
<keyword id="KW-0694">RNA-binding</keyword>
<keyword id="KW-0699">rRNA-binding</keyword>
<reference key="1">
    <citation type="submission" date="2007-05" db="EMBL/GenBank/DDBJ databases">
        <title>Complete sequence of Pseudomonas putida F1.</title>
        <authorList>
            <consortium name="US DOE Joint Genome Institute"/>
            <person name="Copeland A."/>
            <person name="Lucas S."/>
            <person name="Lapidus A."/>
            <person name="Barry K."/>
            <person name="Detter J.C."/>
            <person name="Glavina del Rio T."/>
            <person name="Hammon N."/>
            <person name="Israni S."/>
            <person name="Dalin E."/>
            <person name="Tice H."/>
            <person name="Pitluck S."/>
            <person name="Chain P."/>
            <person name="Malfatti S."/>
            <person name="Shin M."/>
            <person name="Vergez L."/>
            <person name="Schmutz J."/>
            <person name="Larimer F."/>
            <person name="Land M."/>
            <person name="Hauser L."/>
            <person name="Kyrpides N."/>
            <person name="Lykidis A."/>
            <person name="Parales R."/>
            <person name="Richardson P."/>
        </authorList>
    </citation>
    <scope>NUCLEOTIDE SEQUENCE [LARGE SCALE GENOMIC DNA]</scope>
    <source>
        <strain>ATCC 700007 / DSM 6899 / JCM 31910 / BCRC 17059 / LMG 24140 / F1</strain>
    </source>
</reference>
<feature type="chain" id="PRO_1000049043" description="Large ribosomal subunit protein bL20">
    <location>
        <begin position="1"/>
        <end position="118"/>
    </location>
</feature>
<comment type="function">
    <text evidence="1">Binds directly to 23S ribosomal RNA and is necessary for the in vitro assembly process of the 50S ribosomal subunit. It is not involved in the protein synthesizing functions of that subunit.</text>
</comment>
<comment type="similarity">
    <text evidence="1">Belongs to the bacterial ribosomal protein bL20 family.</text>
</comment>
<sequence>MARVKRGVIARKRHKKILKLAKGYYGARSRVFRVAKQAVIKAGQYAYRDRRQKKRQFRALWIARINAGARTNGLSYSRLIAGLKKASIEIDRKVLADLAVNEKAAFAAIVEKAKAVLA</sequence>
<dbReference type="EMBL" id="CP000712">
    <property type="protein sequence ID" value="ABQ79348.1"/>
    <property type="molecule type" value="Genomic_DNA"/>
</dbReference>
<dbReference type="SMR" id="A5W5D8"/>
<dbReference type="KEGG" id="ppf:Pput_3222"/>
<dbReference type="eggNOG" id="COG0292">
    <property type="taxonomic scope" value="Bacteria"/>
</dbReference>
<dbReference type="HOGENOM" id="CLU_123265_0_1_6"/>
<dbReference type="GO" id="GO:1990904">
    <property type="term" value="C:ribonucleoprotein complex"/>
    <property type="evidence" value="ECO:0007669"/>
    <property type="project" value="UniProtKB-KW"/>
</dbReference>
<dbReference type="GO" id="GO:0005840">
    <property type="term" value="C:ribosome"/>
    <property type="evidence" value="ECO:0007669"/>
    <property type="project" value="UniProtKB-KW"/>
</dbReference>
<dbReference type="GO" id="GO:0019843">
    <property type="term" value="F:rRNA binding"/>
    <property type="evidence" value="ECO:0007669"/>
    <property type="project" value="UniProtKB-UniRule"/>
</dbReference>
<dbReference type="GO" id="GO:0003735">
    <property type="term" value="F:structural constituent of ribosome"/>
    <property type="evidence" value="ECO:0007669"/>
    <property type="project" value="InterPro"/>
</dbReference>
<dbReference type="GO" id="GO:0000027">
    <property type="term" value="P:ribosomal large subunit assembly"/>
    <property type="evidence" value="ECO:0007669"/>
    <property type="project" value="UniProtKB-UniRule"/>
</dbReference>
<dbReference type="GO" id="GO:0006412">
    <property type="term" value="P:translation"/>
    <property type="evidence" value="ECO:0007669"/>
    <property type="project" value="InterPro"/>
</dbReference>
<dbReference type="CDD" id="cd07026">
    <property type="entry name" value="Ribosomal_L20"/>
    <property type="match status" value="1"/>
</dbReference>
<dbReference type="FunFam" id="1.10.1900.20:FF:000001">
    <property type="entry name" value="50S ribosomal protein L20"/>
    <property type="match status" value="1"/>
</dbReference>
<dbReference type="Gene3D" id="6.10.160.10">
    <property type="match status" value="1"/>
</dbReference>
<dbReference type="Gene3D" id="1.10.1900.20">
    <property type="entry name" value="Ribosomal protein L20"/>
    <property type="match status" value="1"/>
</dbReference>
<dbReference type="HAMAP" id="MF_00382">
    <property type="entry name" value="Ribosomal_bL20"/>
    <property type="match status" value="1"/>
</dbReference>
<dbReference type="InterPro" id="IPR005813">
    <property type="entry name" value="Ribosomal_bL20"/>
</dbReference>
<dbReference type="InterPro" id="IPR049946">
    <property type="entry name" value="RIBOSOMAL_L20_CS"/>
</dbReference>
<dbReference type="InterPro" id="IPR035566">
    <property type="entry name" value="Ribosomal_protein_bL20_C"/>
</dbReference>
<dbReference type="NCBIfam" id="TIGR01032">
    <property type="entry name" value="rplT_bact"/>
    <property type="match status" value="1"/>
</dbReference>
<dbReference type="PANTHER" id="PTHR10986">
    <property type="entry name" value="39S RIBOSOMAL PROTEIN L20"/>
    <property type="match status" value="1"/>
</dbReference>
<dbReference type="Pfam" id="PF00453">
    <property type="entry name" value="Ribosomal_L20"/>
    <property type="match status" value="1"/>
</dbReference>
<dbReference type="PRINTS" id="PR00062">
    <property type="entry name" value="RIBOSOMALL20"/>
</dbReference>
<dbReference type="SUPFAM" id="SSF74731">
    <property type="entry name" value="Ribosomal protein L20"/>
    <property type="match status" value="1"/>
</dbReference>
<dbReference type="PROSITE" id="PS00937">
    <property type="entry name" value="RIBOSOMAL_L20"/>
    <property type="match status" value="1"/>
</dbReference>
<protein>
    <recommendedName>
        <fullName evidence="1">Large ribosomal subunit protein bL20</fullName>
    </recommendedName>
    <alternativeName>
        <fullName evidence="2">50S ribosomal protein L20</fullName>
    </alternativeName>
</protein>